<feature type="signal peptide" evidence="1">
    <location>
        <begin position="1"/>
        <end position="26"/>
    </location>
</feature>
<feature type="propeptide" id="PRO_0000022058" evidence="4">
    <location>
        <begin position="27"/>
        <end position="30"/>
    </location>
</feature>
<feature type="chain" id="PRO_0000022059" description="3-phytase">
    <location>
        <begin position="31"/>
        <end position="383"/>
    </location>
</feature>
<feature type="domain" description="BPP" evidence="2">
    <location>
        <begin position="31"/>
        <end position="362"/>
    </location>
</feature>
<feature type="region of interest" description="Disordered" evidence="3">
    <location>
        <begin position="364"/>
        <end position="383"/>
    </location>
</feature>
<feature type="compositionally biased region" description="Basic and acidic residues" evidence="3">
    <location>
        <begin position="372"/>
        <end position="383"/>
    </location>
</feature>
<feature type="strand" evidence="5">
    <location>
        <begin position="35"/>
        <end position="38"/>
    </location>
</feature>
<feature type="strand" evidence="5">
    <location>
        <begin position="41"/>
        <end position="43"/>
    </location>
</feature>
<feature type="strand" evidence="5">
    <location>
        <begin position="54"/>
        <end position="60"/>
    </location>
</feature>
<feature type="helix" evidence="5">
    <location>
        <begin position="66"/>
        <end position="68"/>
    </location>
</feature>
<feature type="strand" evidence="5">
    <location>
        <begin position="70"/>
        <end position="75"/>
    </location>
</feature>
<feature type="strand" evidence="5">
    <location>
        <begin position="81"/>
        <end position="84"/>
    </location>
</feature>
<feature type="strand" evidence="5">
    <location>
        <begin position="89"/>
        <end position="92"/>
    </location>
</feature>
<feature type="strand" evidence="5">
    <location>
        <begin position="98"/>
        <end position="109"/>
    </location>
</feature>
<feature type="strand" evidence="5">
    <location>
        <begin position="112"/>
        <end position="121"/>
    </location>
</feature>
<feature type="turn" evidence="5">
    <location>
        <begin position="124"/>
        <end position="126"/>
    </location>
</feature>
<feature type="strand" evidence="5">
    <location>
        <begin position="128"/>
        <end position="135"/>
    </location>
</feature>
<feature type="turn" evidence="5">
    <location>
        <begin position="136"/>
        <end position="139"/>
    </location>
</feature>
<feature type="strand" evidence="5">
    <location>
        <begin position="140"/>
        <end position="143"/>
    </location>
</feature>
<feature type="strand" evidence="5">
    <location>
        <begin position="147"/>
        <end position="149"/>
    </location>
</feature>
<feature type="strand" evidence="5">
    <location>
        <begin position="154"/>
        <end position="157"/>
    </location>
</feature>
<feature type="strand" evidence="5">
    <location>
        <begin position="161"/>
        <end position="165"/>
    </location>
</feature>
<feature type="turn" evidence="5">
    <location>
        <begin position="167"/>
        <end position="169"/>
    </location>
</feature>
<feature type="strand" evidence="5">
    <location>
        <begin position="172"/>
        <end position="177"/>
    </location>
</feature>
<feature type="strand" evidence="5">
    <location>
        <begin position="179"/>
        <end position="190"/>
    </location>
</feature>
<feature type="strand" evidence="5">
    <location>
        <begin position="194"/>
        <end position="205"/>
    </location>
</feature>
<feature type="strand" evidence="5">
    <location>
        <begin position="210"/>
        <end position="216"/>
    </location>
</feature>
<feature type="turn" evidence="5">
    <location>
        <begin position="217"/>
        <end position="220"/>
    </location>
</feature>
<feature type="strand" evidence="5">
    <location>
        <begin position="221"/>
        <end position="226"/>
    </location>
</feature>
<feature type="turn" evidence="5">
    <location>
        <begin position="227"/>
        <end position="229"/>
    </location>
</feature>
<feature type="strand" evidence="5">
    <location>
        <begin position="230"/>
        <end position="237"/>
    </location>
</feature>
<feature type="helix" evidence="7">
    <location>
        <begin position="238"/>
        <end position="240"/>
    </location>
</feature>
<feature type="strand" evidence="5">
    <location>
        <begin position="245"/>
        <end position="249"/>
    </location>
</feature>
<feature type="strand" evidence="5">
    <location>
        <begin position="251"/>
        <end position="254"/>
    </location>
</feature>
<feature type="strand" evidence="5">
    <location>
        <begin position="259"/>
        <end position="266"/>
    </location>
</feature>
<feature type="helix" evidence="5">
    <location>
        <begin position="268"/>
        <end position="270"/>
    </location>
</feature>
<feature type="strand" evidence="5">
    <location>
        <begin position="272"/>
        <end position="278"/>
    </location>
</feature>
<feature type="helix" evidence="5">
    <location>
        <begin position="279"/>
        <end position="281"/>
    </location>
</feature>
<feature type="strand" evidence="5">
    <location>
        <begin position="283"/>
        <end position="290"/>
    </location>
</feature>
<feature type="strand" evidence="5">
    <location>
        <begin position="295"/>
        <end position="301"/>
    </location>
</feature>
<feature type="strand" evidence="5">
    <location>
        <begin position="305"/>
        <end position="307"/>
    </location>
</feature>
<feature type="strand" evidence="5">
    <location>
        <begin position="316"/>
        <end position="319"/>
    </location>
</feature>
<feature type="strand" evidence="7">
    <location>
        <begin position="324"/>
        <end position="326"/>
    </location>
</feature>
<feature type="strand" evidence="5">
    <location>
        <begin position="331"/>
        <end position="338"/>
    </location>
</feature>
<feature type="strand" evidence="7">
    <location>
        <begin position="344"/>
        <end position="346"/>
    </location>
</feature>
<feature type="strand" evidence="5">
    <location>
        <begin position="349"/>
        <end position="354"/>
    </location>
</feature>
<feature type="helix" evidence="5">
    <location>
        <begin position="356"/>
        <end position="359"/>
    </location>
</feature>
<feature type="helix" evidence="5">
    <location>
        <begin position="360"/>
        <end position="362"/>
    </location>
</feature>
<feature type="helix" evidence="6">
    <location>
        <begin position="374"/>
        <end position="376"/>
    </location>
</feature>
<organism>
    <name type="scientific">Bacillus sp. (strain DS11)</name>
    <dbReference type="NCBI Taxonomy" id="86035"/>
    <lineage>
        <taxon>Bacteria</taxon>
        <taxon>Bacillati</taxon>
        <taxon>Bacillota</taxon>
        <taxon>Bacilli</taxon>
        <taxon>Bacillales</taxon>
        <taxon>Bacillaceae</taxon>
        <taxon>Bacillus</taxon>
    </lineage>
</organism>
<protein>
    <recommendedName>
        <fullName>3-phytase</fullName>
        <ecNumber>3.1.3.8</ecNumber>
    </recommendedName>
    <alternativeName>
        <fullName>Myo-inositol-hexaphosphate 3-phosphohydrolase</fullName>
    </alternativeName>
    <alternativeName>
        <fullName>Phytate 3-phosphatase</fullName>
    </alternativeName>
</protein>
<sequence>MNHSKTLLLTAAAGLMLTCGAVSSQAKHKLSDPYHFTVNAAAETEPVDTAGDAADDPAIWLDPKNPQNSKLITTNKKSGLAVYSLEGKMLHSYHTGKLNNVDIRYDFPLNGKKVDIAAASNRSEGKNTIEIYAIDGKNGTLQSITDPNRPIASAIDEVYGFSLYHSQKTGKYYAMVTGKEGEFEQYELNADKNGYISGKKVRAFKMNSQTEGMAADDEYGSLYIAEEDEAIWKFSAEPDGGSNGTVIDRADGRHLTPDIEGLTIYYAADGKGYLLASSQGNSSYAIYERQGQNKYVADFQITDGPETDGTSDTDGIDVLGFGLGPEYPFGLFVAQDGENIDHGQKANQNFKMVPWERIADKIGFHPQVNKQVDPRKMTDRSGK</sequence>
<evidence type="ECO:0000255" key="1"/>
<evidence type="ECO:0000255" key="2">
    <source>
        <dbReference type="PROSITE-ProRule" id="PRU00997"/>
    </source>
</evidence>
<evidence type="ECO:0000256" key="3">
    <source>
        <dbReference type="SAM" id="MobiDB-lite"/>
    </source>
</evidence>
<evidence type="ECO:0000269" key="4">
    <source>
    </source>
</evidence>
<evidence type="ECO:0007829" key="5">
    <source>
        <dbReference type="PDB" id="1H6L"/>
    </source>
</evidence>
<evidence type="ECO:0007829" key="6">
    <source>
        <dbReference type="PDB" id="1QLG"/>
    </source>
</evidence>
<evidence type="ECO:0007829" key="7">
    <source>
        <dbReference type="PDB" id="2POO"/>
    </source>
</evidence>
<accession>O66037</accession>
<comment type="catalytic activity">
    <reaction evidence="2">
        <text>1D-myo-inositol hexakisphosphate + H2O = 1D-myo-inositol 1,2,4,5,6-pentakisphosphate + phosphate</text>
        <dbReference type="Rhea" id="RHEA:16989"/>
        <dbReference type="ChEBI" id="CHEBI:15377"/>
        <dbReference type="ChEBI" id="CHEBI:43474"/>
        <dbReference type="ChEBI" id="CHEBI:57798"/>
        <dbReference type="ChEBI" id="CHEBI:58130"/>
        <dbReference type="EC" id="3.1.3.8"/>
    </reaction>
</comment>
<comment type="subcellular location">
    <subcellularLocation>
        <location>Secreted</location>
    </subcellularLocation>
</comment>
<reference key="1">
    <citation type="journal article" date="1998" name="FEMS Microbiol. Lett.">
        <title>Cloning of the thermostable phytase gene (phy) from Bacillus sp. DS11 and its overexpression in Escherichia coli.</title>
        <authorList>
            <person name="Kim Y.-O."/>
            <person name="Lee J.-K."/>
            <person name="Kim H.-K."/>
            <person name="Yu J.-H."/>
            <person name="Oh T.-K."/>
        </authorList>
    </citation>
    <scope>NUCLEOTIDE SEQUENCE [GENOMIC DNA]</scope>
    <scope>PROTEIN SEQUENCE OF 31-44 AND 214-223</scope>
</reference>
<reference key="2">
    <citation type="journal article" date="1999" name="Acta Crystallogr. D">
        <title>Preliminary X-ray crystallographic analysis of a novel phytase from a Bacillus amyloliquefaciens strain.</title>
        <authorList>
            <person name="Ha N.-C."/>
            <person name="Kim Y.-O."/>
            <person name="Oh T.-K."/>
            <person name="Oh B.-H."/>
        </authorList>
    </citation>
    <scope>X-RAY CRYSTALLOGRAPHY (2.05 ANGSTROMS)</scope>
</reference>
<reference key="3">
    <citation type="journal article" date="2000" name="Nat. Struct. Biol.">
        <title>Crystal structures of a novel, thermostable phytase in partially and fully calcium-loaded states.</title>
        <authorList>
            <person name="Ha N.-C."/>
            <person name="Oh B.-C."/>
            <person name="Shin S."/>
            <person name="Kim H.-J."/>
            <person name="Oh T.-K."/>
            <person name="Kim Y.-O."/>
            <person name="Choi K.Y."/>
            <person name="Oh B.-H."/>
        </authorList>
    </citation>
    <scope>X-RAY CRYSTALLOGRAPHY (2.1 ANGSTROMS)</scope>
</reference>
<name>PHYT_BACSD</name>
<keyword id="KW-0002">3D-structure</keyword>
<keyword id="KW-0903">Direct protein sequencing</keyword>
<keyword id="KW-0378">Hydrolase</keyword>
<keyword id="KW-0964">Secreted</keyword>
<keyword id="KW-0732">Signal</keyword>
<dbReference type="EC" id="3.1.3.8"/>
<dbReference type="EMBL" id="U85968">
    <property type="protein sequence ID" value="AAC38573.1"/>
    <property type="molecule type" value="Genomic_DNA"/>
</dbReference>
<dbReference type="PDB" id="1CVM">
    <property type="method" value="X-ray"/>
    <property type="resolution" value="2.40 A"/>
    <property type="chains" value="A=29-381"/>
</dbReference>
<dbReference type="PDB" id="1H6L">
    <property type="method" value="X-ray"/>
    <property type="resolution" value="1.80 A"/>
    <property type="chains" value="A=29-381"/>
</dbReference>
<dbReference type="PDB" id="1POO">
    <property type="method" value="X-ray"/>
    <property type="resolution" value="2.10 A"/>
    <property type="chains" value="A=29-383"/>
</dbReference>
<dbReference type="PDB" id="1QLG">
    <property type="method" value="X-ray"/>
    <property type="resolution" value="2.20 A"/>
    <property type="chains" value="A=29-381"/>
</dbReference>
<dbReference type="PDB" id="2POO">
    <property type="method" value="X-ray"/>
    <property type="resolution" value="2.05 A"/>
    <property type="chains" value="A=29-383"/>
</dbReference>
<dbReference type="PDBsum" id="1CVM"/>
<dbReference type="PDBsum" id="1H6L"/>
<dbReference type="PDBsum" id="1POO"/>
<dbReference type="PDBsum" id="1QLG"/>
<dbReference type="PDBsum" id="2POO"/>
<dbReference type="SMR" id="O66037"/>
<dbReference type="BRENDA" id="3.1.3.8">
    <property type="organism ID" value="691"/>
</dbReference>
<dbReference type="EvolutionaryTrace" id="O66037"/>
<dbReference type="GO" id="GO:0005576">
    <property type="term" value="C:extracellular region"/>
    <property type="evidence" value="ECO:0007669"/>
    <property type="project" value="UniProtKB-SubCell"/>
</dbReference>
<dbReference type="GO" id="GO:0016158">
    <property type="term" value="F:3-phytase activity"/>
    <property type="evidence" value="ECO:0007669"/>
    <property type="project" value="UniProtKB-EC"/>
</dbReference>
<dbReference type="Gene3D" id="2.120.10.30">
    <property type="entry name" value="TolB, C-terminal domain"/>
    <property type="match status" value="1"/>
</dbReference>
<dbReference type="InterPro" id="IPR011042">
    <property type="entry name" value="6-blade_b-propeller_TolB-like"/>
</dbReference>
<dbReference type="InterPro" id="IPR003431">
    <property type="entry name" value="BP_Phytase"/>
</dbReference>
<dbReference type="Pfam" id="PF02333">
    <property type="entry name" value="Phytase"/>
    <property type="match status" value="1"/>
</dbReference>
<dbReference type="SUPFAM" id="SSF50956">
    <property type="entry name" value="Thermostable phytase (3-phytase)"/>
    <property type="match status" value="1"/>
</dbReference>
<dbReference type="PROSITE" id="PS51662">
    <property type="entry name" value="BP_PHYTASE"/>
    <property type="match status" value="1"/>
</dbReference>
<proteinExistence type="evidence at protein level"/>
<gene>
    <name type="primary">phy</name>
</gene>